<sequence length="571" mass="63171">MRTSQFLLATQKETPSDAVVVSHQLMLRAGMIRKLASGLYTWLPMGLRVLRKVEAIVREEMDAAGALEILMPGIQPAELWQESGRWEQYGPELMRLVDRHNREFCLGPTHEEVITDLARNELNSYKQLPINMYQIQTKFRDEIRPRFGLMRGREFVMKDAYSFHADHESLQVTYDRMHLAYSNIFTRLGLKFRPVEADNGSIGGAGSHEFHVLAESGEDDIVFSDGSDYAANIEKAEAIPREKTRPAATEELRLIDTPNTKTIAQLVEGFGLPIEKTVKTLVVHAAEEGKLIALIIRGDHELNEIKASQLEQVANPLVMASEAELRDAIGAGAGSLGPLNLPLPCIIDRSVELMSDFSVGANIDDKHYFGVNWERDLPVPTVADLRNVVAGDPSPDGKGTLEIKRGIEVGHIFQLGTKYSEAMKCQVLGENGKPVNLAMGCYGIGVSRVVAAAIEQNSDENGIIWNDTLAPFQIALVPLRYETDAVREATDKLYADLTAAGFEVLLDDRDKKTSPGIKFADMELIGIPHRIVVSDRGLAEGNLEYKSRTESQPQAIAVADVLSFIQGKVNR</sequence>
<feature type="chain" id="PRO_0000248749" description="Proline--tRNA ligase">
    <location>
        <begin position="1"/>
        <end position="571"/>
    </location>
</feature>
<reference key="1">
    <citation type="journal article" date="2005" name="Proc. Natl. Acad. Sci. U.S.A.">
        <title>Comparison of the complete genome sequences of Pseudomonas syringae pv. syringae B728a and pv. tomato DC3000.</title>
        <authorList>
            <person name="Feil H."/>
            <person name="Feil W.S."/>
            <person name="Chain P."/>
            <person name="Larimer F."/>
            <person name="Dibartolo G."/>
            <person name="Copeland A."/>
            <person name="Lykidis A."/>
            <person name="Trong S."/>
            <person name="Nolan M."/>
            <person name="Goltsman E."/>
            <person name="Thiel J."/>
            <person name="Malfatti S."/>
            <person name="Loper J.E."/>
            <person name="Lapidus A."/>
            <person name="Detter J.C."/>
            <person name="Land M."/>
            <person name="Richardson P.M."/>
            <person name="Kyrpides N.C."/>
            <person name="Ivanova N."/>
            <person name="Lindow S.E."/>
        </authorList>
    </citation>
    <scope>NUCLEOTIDE SEQUENCE [LARGE SCALE GENOMIC DNA]</scope>
    <source>
        <strain>B728a</strain>
    </source>
</reference>
<gene>
    <name evidence="1" type="primary">proS</name>
    <name type="ordered locus">Psyr_1399</name>
</gene>
<accession>Q4ZWM2</accession>
<protein>
    <recommendedName>
        <fullName evidence="1">Proline--tRNA ligase</fullName>
        <ecNumber evidence="1">6.1.1.15</ecNumber>
    </recommendedName>
    <alternativeName>
        <fullName evidence="1">Prolyl-tRNA synthetase</fullName>
        <shortName evidence="1">ProRS</shortName>
    </alternativeName>
</protein>
<name>SYP_PSEU2</name>
<evidence type="ECO:0000255" key="1">
    <source>
        <dbReference type="HAMAP-Rule" id="MF_01569"/>
    </source>
</evidence>
<organism>
    <name type="scientific">Pseudomonas syringae pv. syringae (strain B728a)</name>
    <dbReference type="NCBI Taxonomy" id="205918"/>
    <lineage>
        <taxon>Bacteria</taxon>
        <taxon>Pseudomonadati</taxon>
        <taxon>Pseudomonadota</taxon>
        <taxon>Gammaproteobacteria</taxon>
        <taxon>Pseudomonadales</taxon>
        <taxon>Pseudomonadaceae</taxon>
        <taxon>Pseudomonas</taxon>
        <taxon>Pseudomonas syringae</taxon>
    </lineage>
</organism>
<proteinExistence type="inferred from homology"/>
<comment type="function">
    <text evidence="1">Catalyzes the attachment of proline to tRNA(Pro) in a two-step reaction: proline is first activated by ATP to form Pro-AMP and then transferred to the acceptor end of tRNA(Pro). As ProRS can inadvertently accommodate and process non-cognate amino acids such as alanine and cysteine, to avoid such errors it has two additional distinct editing activities against alanine. One activity is designated as 'pretransfer' editing and involves the tRNA(Pro)-independent hydrolysis of activated Ala-AMP. The other activity is designated 'posttransfer' editing and involves deacylation of mischarged Ala-tRNA(Pro). The misacylated Cys-tRNA(Pro) is not edited by ProRS.</text>
</comment>
<comment type="catalytic activity">
    <reaction evidence="1">
        <text>tRNA(Pro) + L-proline + ATP = L-prolyl-tRNA(Pro) + AMP + diphosphate</text>
        <dbReference type="Rhea" id="RHEA:14305"/>
        <dbReference type="Rhea" id="RHEA-COMP:9700"/>
        <dbReference type="Rhea" id="RHEA-COMP:9702"/>
        <dbReference type="ChEBI" id="CHEBI:30616"/>
        <dbReference type="ChEBI" id="CHEBI:33019"/>
        <dbReference type="ChEBI" id="CHEBI:60039"/>
        <dbReference type="ChEBI" id="CHEBI:78442"/>
        <dbReference type="ChEBI" id="CHEBI:78532"/>
        <dbReference type="ChEBI" id="CHEBI:456215"/>
        <dbReference type="EC" id="6.1.1.15"/>
    </reaction>
</comment>
<comment type="subunit">
    <text evidence="1">Homodimer.</text>
</comment>
<comment type="subcellular location">
    <subcellularLocation>
        <location evidence="1">Cytoplasm</location>
    </subcellularLocation>
</comment>
<comment type="domain">
    <text evidence="1">Consists of three domains: the N-terminal catalytic domain, the editing domain and the C-terminal anticodon-binding domain.</text>
</comment>
<comment type="similarity">
    <text evidence="1">Belongs to the class-II aminoacyl-tRNA synthetase family. ProS type 1 subfamily.</text>
</comment>
<dbReference type="EC" id="6.1.1.15" evidence="1"/>
<dbReference type="EMBL" id="CP000075">
    <property type="protein sequence ID" value="AAY36450.1"/>
    <property type="molecule type" value="Genomic_DNA"/>
</dbReference>
<dbReference type="RefSeq" id="WP_004418668.1">
    <property type="nucleotide sequence ID" value="NC_007005.1"/>
</dbReference>
<dbReference type="RefSeq" id="YP_234488.1">
    <property type="nucleotide sequence ID" value="NC_007005.1"/>
</dbReference>
<dbReference type="SMR" id="Q4ZWM2"/>
<dbReference type="STRING" id="205918.Psyr_1399"/>
<dbReference type="KEGG" id="psb:Psyr_1399"/>
<dbReference type="PATRIC" id="fig|205918.7.peg.1433"/>
<dbReference type="eggNOG" id="COG0442">
    <property type="taxonomic scope" value="Bacteria"/>
</dbReference>
<dbReference type="HOGENOM" id="CLU_016739_0_0_6"/>
<dbReference type="OrthoDB" id="9809052at2"/>
<dbReference type="Proteomes" id="UP000000426">
    <property type="component" value="Chromosome"/>
</dbReference>
<dbReference type="GO" id="GO:0005829">
    <property type="term" value="C:cytosol"/>
    <property type="evidence" value="ECO:0007669"/>
    <property type="project" value="TreeGrafter"/>
</dbReference>
<dbReference type="GO" id="GO:0002161">
    <property type="term" value="F:aminoacyl-tRNA deacylase activity"/>
    <property type="evidence" value="ECO:0007669"/>
    <property type="project" value="InterPro"/>
</dbReference>
<dbReference type="GO" id="GO:0005524">
    <property type="term" value="F:ATP binding"/>
    <property type="evidence" value="ECO:0007669"/>
    <property type="project" value="UniProtKB-UniRule"/>
</dbReference>
<dbReference type="GO" id="GO:0004827">
    <property type="term" value="F:proline-tRNA ligase activity"/>
    <property type="evidence" value="ECO:0007669"/>
    <property type="project" value="UniProtKB-UniRule"/>
</dbReference>
<dbReference type="GO" id="GO:0006433">
    <property type="term" value="P:prolyl-tRNA aminoacylation"/>
    <property type="evidence" value="ECO:0007669"/>
    <property type="project" value="UniProtKB-UniRule"/>
</dbReference>
<dbReference type="CDD" id="cd04334">
    <property type="entry name" value="ProRS-INS"/>
    <property type="match status" value="1"/>
</dbReference>
<dbReference type="CDD" id="cd00861">
    <property type="entry name" value="ProRS_anticodon_short"/>
    <property type="match status" value="1"/>
</dbReference>
<dbReference type="CDD" id="cd00779">
    <property type="entry name" value="ProRS_core_prok"/>
    <property type="match status" value="1"/>
</dbReference>
<dbReference type="FunFam" id="3.30.930.10:FF:000043">
    <property type="entry name" value="Proline--tRNA ligase"/>
    <property type="match status" value="1"/>
</dbReference>
<dbReference type="FunFam" id="3.30.930.10:FF:000097">
    <property type="entry name" value="Proline--tRNA ligase"/>
    <property type="match status" value="1"/>
</dbReference>
<dbReference type="FunFam" id="3.90.960.10:FF:000001">
    <property type="entry name" value="Proline--tRNA ligase"/>
    <property type="match status" value="1"/>
</dbReference>
<dbReference type="Gene3D" id="3.40.50.800">
    <property type="entry name" value="Anticodon-binding domain"/>
    <property type="match status" value="1"/>
</dbReference>
<dbReference type="Gene3D" id="3.30.930.10">
    <property type="entry name" value="Bira Bifunctional Protein, Domain 2"/>
    <property type="match status" value="2"/>
</dbReference>
<dbReference type="Gene3D" id="3.90.960.10">
    <property type="entry name" value="YbaK/aminoacyl-tRNA synthetase-associated domain"/>
    <property type="match status" value="1"/>
</dbReference>
<dbReference type="HAMAP" id="MF_01569">
    <property type="entry name" value="Pro_tRNA_synth_type1"/>
    <property type="match status" value="1"/>
</dbReference>
<dbReference type="InterPro" id="IPR002314">
    <property type="entry name" value="aa-tRNA-synt_IIb"/>
</dbReference>
<dbReference type="InterPro" id="IPR006195">
    <property type="entry name" value="aa-tRNA-synth_II"/>
</dbReference>
<dbReference type="InterPro" id="IPR045864">
    <property type="entry name" value="aa-tRNA-synth_II/BPL/LPL"/>
</dbReference>
<dbReference type="InterPro" id="IPR004154">
    <property type="entry name" value="Anticodon-bd"/>
</dbReference>
<dbReference type="InterPro" id="IPR036621">
    <property type="entry name" value="Anticodon-bd_dom_sf"/>
</dbReference>
<dbReference type="InterPro" id="IPR002316">
    <property type="entry name" value="Pro-tRNA-ligase_IIa"/>
</dbReference>
<dbReference type="InterPro" id="IPR004500">
    <property type="entry name" value="Pro-tRNA-synth_IIa_bac-type"/>
</dbReference>
<dbReference type="InterPro" id="IPR023717">
    <property type="entry name" value="Pro-tRNA-Synthase_IIa_type1"/>
</dbReference>
<dbReference type="InterPro" id="IPR050062">
    <property type="entry name" value="Pro-tRNA_synthetase"/>
</dbReference>
<dbReference type="InterPro" id="IPR044140">
    <property type="entry name" value="ProRS_anticodon_short"/>
</dbReference>
<dbReference type="InterPro" id="IPR033730">
    <property type="entry name" value="ProRS_core_prok"/>
</dbReference>
<dbReference type="InterPro" id="IPR036754">
    <property type="entry name" value="YbaK/aa-tRNA-synt-asso_dom_sf"/>
</dbReference>
<dbReference type="InterPro" id="IPR007214">
    <property type="entry name" value="YbaK/aa-tRNA-synth-assoc-dom"/>
</dbReference>
<dbReference type="NCBIfam" id="NF006625">
    <property type="entry name" value="PRK09194.1"/>
    <property type="match status" value="1"/>
</dbReference>
<dbReference type="NCBIfam" id="TIGR00409">
    <property type="entry name" value="proS_fam_II"/>
    <property type="match status" value="1"/>
</dbReference>
<dbReference type="PANTHER" id="PTHR42753">
    <property type="entry name" value="MITOCHONDRIAL RIBOSOME PROTEIN L39/PROLYL-TRNA LIGASE FAMILY MEMBER"/>
    <property type="match status" value="1"/>
</dbReference>
<dbReference type="PANTHER" id="PTHR42753:SF2">
    <property type="entry name" value="PROLINE--TRNA LIGASE"/>
    <property type="match status" value="1"/>
</dbReference>
<dbReference type="Pfam" id="PF03129">
    <property type="entry name" value="HGTP_anticodon"/>
    <property type="match status" value="1"/>
</dbReference>
<dbReference type="Pfam" id="PF00587">
    <property type="entry name" value="tRNA-synt_2b"/>
    <property type="match status" value="1"/>
</dbReference>
<dbReference type="Pfam" id="PF04073">
    <property type="entry name" value="tRNA_edit"/>
    <property type="match status" value="1"/>
</dbReference>
<dbReference type="PIRSF" id="PIRSF001535">
    <property type="entry name" value="ProRS_1"/>
    <property type="match status" value="1"/>
</dbReference>
<dbReference type="PRINTS" id="PR01046">
    <property type="entry name" value="TRNASYNTHPRO"/>
</dbReference>
<dbReference type="SUPFAM" id="SSF52954">
    <property type="entry name" value="Class II aaRS ABD-related"/>
    <property type="match status" value="1"/>
</dbReference>
<dbReference type="SUPFAM" id="SSF55681">
    <property type="entry name" value="Class II aaRS and biotin synthetases"/>
    <property type="match status" value="1"/>
</dbReference>
<dbReference type="SUPFAM" id="SSF55826">
    <property type="entry name" value="YbaK/ProRS associated domain"/>
    <property type="match status" value="1"/>
</dbReference>
<dbReference type="PROSITE" id="PS50862">
    <property type="entry name" value="AA_TRNA_LIGASE_II"/>
    <property type="match status" value="1"/>
</dbReference>
<keyword id="KW-0030">Aminoacyl-tRNA synthetase</keyword>
<keyword id="KW-0067">ATP-binding</keyword>
<keyword id="KW-0963">Cytoplasm</keyword>
<keyword id="KW-0436">Ligase</keyword>
<keyword id="KW-0547">Nucleotide-binding</keyword>
<keyword id="KW-0648">Protein biosynthesis</keyword>